<keyword id="KW-0067">ATP-binding</keyword>
<keyword id="KW-0963">Cytoplasm</keyword>
<keyword id="KW-0418">Kinase</keyword>
<keyword id="KW-0547">Nucleotide-binding</keyword>
<keyword id="KW-0808">Transferase</keyword>
<feature type="chain" id="PRO_1000048266" description="Cytidylate kinase">
    <location>
        <begin position="1"/>
        <end position="218"/>
    </location>
</feature>
<feature type="binding site" evidence="1">
    <location>
        <begin position="21"/>
        <end position="29"/>
    </location>
    <ligand>
        <name>ATP</name>
        <dbReference type="ChEBI" id="CHEBI:30616"/>
    </ligand>
</feature>
<accession>A8EYM7</accession>
<sequence>MMDLKTKAFDISQNFTISLDGPAASGKGTIGLMLAKKFSLKYFQSSIVYRQLTFDCISQKIDITDIDAVIALSKRLKLDNNLDLENENIGDIASQIAVISEVRNNLNKYLINLVKTTPRIIMEGRDIGTVVAPDADLKIFITANPDIRAERRYKQLQAKGKACILDEILQQIILRDKRDKERKVAPLLPASDALIIDTSKLSAIEVVEEITHYMQIIK</sequence>
<protein>
    <recommendedName>
        <fullName evidence="1">Cytidylate kinase</fullName>
        <shortName evidence="1">CK</shortName>
        <ecNumber evidence="1">2.7.4.25</ecNumber>
    </recommendedName>
    <alternativeName>
        <fullName evidence="1">Cytidine monophosphate kinase</fullName>
        <shortName evidence="1">CMP kinase</shortName>
    </alternativeName>
</protein>
<gene>
    <name evidence="1" type="primary">cmk</name>
    <name type="ordered locus">A1E_02580</name>
</gene>
<comment type="catalytic activity">
    <reaction evidence="1">
        <text>CMP + ATP = CDP + ADP</text>
        <dbReference type="Rhea" id="RHEA:11600"/>
        <dbReference type="ChEBI" id="CHEBI:30616"/>
        <dbReference type="ChEBI" id="CHEBI:58069"/>
        <dbReference type="ChEBI" id="CHEBI:60377"/>
        <dbReference type="ChEBI" id="CHEBI:456216"/>
        <dbReference type="EC" id="2.7.4.25"/>
    </reaction>
</comment>
<comment type="catalytic activity">
    <reaction evidence="1">
        <text>dCMP + ATP = dCDP + ADP</text>
        <dbReference type="Rhea" id="RHEA:25094"/>
        <dbReference type="ChEBI" id="CHEBI:30616"/>
        <dbReference type="ChEBI" id="CHEBI:57566"/>
        <dbReference type="ChEBI" id="CHEBI:58593"/>
        <dbReference type="ChEBI" id="CHEBI:456216"/>
        <dbReference type="EC" id="2.7.4.25"/>
    </reaction>
</comment>
<comment type="subcellular location">
    <subcellularLocation>
        <location evidence="1">Cytoplasm</location>
    </subcellularLocation>
</comment>
<comment type="similarity">
    <text evidence="1">Belongs to the cytidylate kinase family. Type 1 subfamily.</text>
</comment>
<proteinExistence type="inferred from homology"/>
<name>KCY_RICCK</name>
<evidence type="ECO:0000255" key="1">
    <source>
        <dbReference type="HAMAP-Rule" id="MF_00238"/>
    </source>
</evidence>
<reference key="1">
    <citation type="submission" date="2007-09" db="EMBL/GenBank/DDBJ databases">
        <title>Complete genome sequence of Rickettsia canadensis.</title>
        <authorList>
            <person name="Madan A."/>
            <person name="Fahey J."/>
            <person name="Helton E."/>
            <person name="Ketteman M."/>
            <person name="Madan A."/>
            <person name="Rodrigues S."/>
            <person name="Sanchez A."/>
            <person name="Whiting M."/>
            <person name="Dasch G."/>
            <person name="Eremeeva M."/>
        </authorList>
    </citation>
    <scope>NUCLEOTIDE SEQUENCE [LARGE SCALE GENOMIC DNA]</scope>
    <source>
        <strain>McKiel</strain>
    </source>
</reference>
<organism>
    <name type="scientific">Rickettsia canadensis (strain McKiel)</name>
    <dbReference type="NCBI Taxonomy" id="293613"/>
    <lineage>
        <taxon>Bacteria</taxon>
        <taxon>Pseudomonadati</taxon>
        <taxon>Pseudomonadota</taxon>
        <taxon>Alphaproteobacteria</taxon>
        <taxon>Rickettsiales</taxon>
        <taxon>Rickettsiaceae</taxon>
        <taxon>Rickettsieae</taxon>
        <taxon>Rickettsia</taxon>
        <taxon>belli group</taxon>
    </lineage>
</organism>
<dbReference type="EC" id="2.7.4.25" evidence="1"/>
<dbReference type="EMBL" id="CP000409">
    <property type="protein sequence ID" value="ABV73460.1"/>
    <property type="molecule type" value="Genomic_DNA"/>
</dbReference>
<dbReference type="RefSeq" id="WP_012148657.1">
    <property type="nucleotide sequence ID" value="NC_009879.1"/>
</dbReference>
<dbReference type="SMR" id="A8EYM7"/>
<dbReference type="STRING" id="293613.A1E_02580"/>
<dbReference type="KEGG" id="rcm:A1E_02580"/>
<dbReference type="eggNOG" id="COG0283">
    <property type="taxonomic scope" value="Bacteria"/>
</dbReference>
<dbReference type="HOGENOM" id="CLU_079959_0_2_5"/>
<dbReference type="Proteomes" id="UP000007056">
    <property type="component" value="Chromosome"/>
</dbReference>
<dbReference type="GO" id="GO:0005737">
    <property type="term" value="C:cytoplasm"/>
    <property type="evidence" value="ECO:0007669"/>
    <property type="project" value="UniProtKB-SubCell"/>
</dbReference>
<dbReference type="GO" id="GO:0005524">
    <property type="term" value="F:ATP binding"/>
    <property type="evidence" value="ECO:0007669"/>
    <property type="project" value="UniProtKB-UniRule"/>
</dbReference>
<dbReference type="GO" id="GO:0036430">
    <property type="term" value="F:CMP kinase activity"/>
    <property type="evidence" value="ECO:0007669"/>
    <property type="project" value="RHEA"/>
</dbReference>
<dbReference type="GO" id="GO:0036431">
    <property type="term" value="F:dCMP kinase activity"/>
    <property type="evidence" value="ECO:0007669"/>
    <property type="project" value="RHEA"/>
</dbReference>
<dbReference type="GO" id="GO:0006220">
    <property type="term" value="P:pyrimidine nucleotide metabolic process"/>
    <property type="evidence" value="ECO:0007669"/>
    <property type="project" value="UniProtKB-UniRule"/>
</dbReference>
<dbReference type="CDD" id="cd02020">
    <property type="entry name" value="CMPK"/>
    <property type="match status" value="1"/>
</dbReference>
<dbReference type="Gene3D" id="3.40.50.300">
    <property type="entry name" value="P-loop containing nucleotide triphosphate hydrolases"/>
    <property type="match status" value="1"/>
</dbReference>
<dbReference type="HAMAP" id="MF_00238">
    <property type="entry name" value="Cytidyl_kinase_type1"/>
    <property type="match status" value="1"/>
</dbReference>
<dbReference type="InterPro" id="IPR003136">
    <property type="entry name" value="Cytidylate_kin"/>
</dbReference>
<dbReference type="InterPro" id="IPR011994">
    <property type="entry name" value="Cytidylate_kinase_dom"/>
</dbReference>
<dbReference type="InterPro" id="IPR027417">
    <property type="entry name" value="P-loop_NTPase"/>
</dbReference>
<dbReference type="NCBIfam" id="TIGR00017">
    <property type="entry name" value="cmk"/>
    <property type="match status" value="1"/>
</dbReference>
<dbReference type="Pfam" id="PF02224">
    <property type="entry name" value="Cytidylate_kin"/>
    <property type="match status" value="1"/>
</dbReference>
<dbReference type="SUPFAM" id="SSF52540">
    <property type="entry name" value="P-loop containing nucleoside triphosphate hydrolases"/>
    <property type="match status" value="1"/>
</dbReference>